<keyword id="KW-0002">3D-structure</keyword>
<keyword id="KW-0378">Hydrolase</keyword>
<keyword id="KW-1185">Reference proteome</keyword>
<protein>
    <recommendedName>
        <fullName>Uncharacterized hydrolase SAOUHSC_02900</fullName>
        <ecNumber>3.-.-.-</ecNumber>
    </recommendedName>
</protein>
<sequence>METLELQGAKLRYHQVGQGPVLIFIPGANGTGDIFLPLAEQLKDHFTVVAVDRRDYGESELTEPLPDSASNPDSDYRVKRDAQDIAELAKSLSDEPVYILGSSSGSIVAMHVLKDYPEVVKKIAFHEPPINTFLPDSTYWKDKNDDIVHQILTEGLEKGMKTFGETLNIAPIDAKMMSQPADTEEGRIEQYKRTMFWSEFEIRQYTHSDITLDDFTKYSDKITLLNGTDSRGSFPQDVNFYINKETGIPIVDIPGGHLGYIQKPEGFADVLLNMWG</sequence>
<name>Y2900_STAA8</name>
<gene>
    <name type="ordered locus">SAOUHSC_02900</name>
</gene>
<dbReference type="EC" id="3.-.-.-"/>
<dbReference type="EMBL" id="CP000253">
    <property type="protein sequence ID" value="ABD31896.1"/>
    <property type="molecule type" value="Genomic_DNA"/>
</dbReference>
<dbReference type="RefSeq" id="WP_000448905.1">
    <property type="nucleotide sequence ID" value="NZ_LS483365.1"/>
</dbReference>
<dbReference type="RefSeq" id="YP_501353.1">
    <property type="nucleotide sequence ID" value="NC_007795.1"/>
</dbReference>
<dbReference type="PDB" id="8UGM">
    <property type="method" value="X-ray"/>
    <property type="resolution" value="1.65 A"/>
    <property type="chains" value="A/B=1-276"/>
</dbReference>
<dbReference type="PDB" id="8UIX">
    <property type="method" value="X-ray"/>
    <property type="resolution" value="2.39 A"/>
    <property type="chains" value="A/B=1-276"/>
</dbReference>
<dbReference type="PDB" id="8UWM">
    <property type="method" value="X-ray"/>
    <property type="resolution" value="1.97 A"/>
    <property type="chains" value="A/B=1-276"/>
</dbReference>
<dbReference type="PDBsum" id="8UGM"/>
<dbReference type="PDBsum" id="8UIX"/>
<dbReference type="PDBsum" id="8UWM"/>
<dbReference type="SMR" id="Q2FV39"/>
<dbReference type="STRING" id="93061.SAOUHSC_02900"/>
<dbReference type="ESTHER" id="staau-SA2367">
    <property type="family name" value="6_AlphaBeta_hydrolase"/>
</dbReference>
<dbReference type="PaxDb" id="1280-SAXN108_2831"/>
<dbReference type="GeneID" id="3921352"/>
<dbReference type="KEGG" id="sao:SAOUHSC_02900"/>
<dbReference type="PATRIC" id="fig|93061.5.peg.2621"/>
<dbReference type="eggNOG" id="COG0596">
    <property type="taxonomic scope" value="Bacteria"/>
</dbReference>
<dbReference type="HOGENOM" id="CLU_083329_0_0_9"/>
<dbReference type="OrthoDB" id="9805423at2"/>
<dbReference type="PRO" id="PR:Q2FV39"/>
<dbReference type="Proteomes" id="UP000008816">
    <property type="component" value="Chromosome"/>
</dbReference>
<dbReference type="GO" id="GO:0016787">
    <property type="term" value="F:hydrolase activity"/>
    <property type="evidence" value="ECO:0007669"/>
    <property type="project" value="UniProtKB-KW"/>
</dbReference>
<dbReference type="Gene3D" id="3.40.50.1820">
    <property type="entry name" value="alpha/beta hydrolase"/>
    <property type="match status" value="1"/>
</dbReference>
<dbReference type="InterPro" id="IPR000073">
    <property type="entry name" value="AB_hydrolase_1"/>
</dbReference>
<dbReference type="InterPro" id="IPR029058">
    <property type="entry name" value="AB_hydrolase_fold"/>
</dbReference>
<dbReference type="InterPro" id="IPR050266">
    <property type="entry name" value="AB_hydrolase_sf"/>
</dbReference>
<dbReference type="PANTHER" id="PTHR43798:SF33">
    <property type="entry name" value="HYDROLASE, PUTATIVE (AFU_ORTHOLOGUE AFUA_2G14860)-RELATED"/>
    <property type="match status" value="1"/>
</dbReference>
<dbReference type="PANTHER" id="PTHR43798">
    <property type="entry name" value="MONOACYLGLYCEROL LIPASE"/>
    <property type="match status" value="1"/>
</dbReference>
<dbReference type="Pfam" id="PF00561">
    <property type="entry name" value="Abhydrolase_1"/>
    <property type="match status" value="1"/>
</dbReference>
<dbReference type="SUPFAM" id="SSF53474">
    <property type="entry name" value="alpha/beta-Hydrolases"/>
    <property type="match status" value="1"/>
</dbReference>
<evidence type="ECO:0000255" key="1"/>
<evidence type="ECO:0000256" key="2">
    <source>
        <dbReference type="SAM" id="MobiDB-lite"/>
    </source>
</evidence>
<evidence type="ECO:0000305" key="3"/>
<evidence type="ECO:0007829" key="4">
    <source>
        <dbReference type="PDB" id="8UWM"/>
    </source>
</evidence>
<reference key="1">
    <citation type="book" date="2006" name="Gram positive pathogens, 2nd edition">
        <title>The Staphylococcus aureus NCTC 8325 genome.</title>
        <editorList>
            <person name="Fischetti V."/>
            <person name="Novick R."/>
            <person name="Ferretti J."/>
            <person name="Portnoy D."/>
            <person name="Rood J."/>
        </editorList>
        <authorList>
            <person name="Gillaspy A.F."/>
            <person name="Worrell V."/>
            <person name="Orvis J."/>
            <person name="Roe B.A."/>
            <person name="Dyer D.W."/>
            <person name="Iandolo J.J."/>
        </authorList>
    </citation>
    <scope>NUCLEOTIDE SEQUENCE [LARGE SCALE GENOMIC DNA]</scope>
    <source>
        <strain>NCTC 8325 / PS 47</strain>
    </source>
</reference>
<proteinExistence type="evidence at protein level"/>
<feature type="chain" id="PRO_0000298616" description="Uncharacterized hydrolase SAOUHSC_02900">
    <location>
        <begin position="1"/>
        <end position="276"/>
    </location>
</feature>
<feature type="domain" description="AB hydrolase-1" evidence="1">
    <location>
        <begin position="20"/>
        <end position="137"/>
    </location>
</feature>
<feature type="region of interest" description="Disordered" evidence="2">
    <location>
        <begin position="57"/>
        <end position="76"/>
    </location>
</feature>
<feature type="strand" evidence="4">
    <location>
        <begin position="2"/>
        <end position="6"/>
    </location>
</feature>
<feature type="strand" evidence="4">
    <location>
        <begin position="9"/>
        <end position="25"/>
    </location>
</feature>
<feature type="helix" evidence="4">
    <location>
        <begin position="32"/>
        <end position="35"/>
    </location>
</feature>
<feature type="helix" evidence="4">
    <location>
        <begin position="36"/>
        <end position="42"/>
    </location>
</feature>
<feature type="turn" evidence="4">
    <location>
        <begin position="43"/>
        <end position="45"/>
    </location>
</feature>
<feature type="strand" evidence="4">
    <location>
        <begin position="47"/>
        <end position="52"/>
    </location>
</feature>
<feature type="strand" evidence="4">
    <location>
        <begin position="60"/>
        <end position="63"/>
    </location>
</feature>
<feature type="helix" evidence="4">
    <location>
        <begin position="67"/>
        <end position="70"/>
    </location>
</feature>
<feature type="helix" evidence="4">
    <location>
        <begin position="76"/>
        <end position="92"/>
    </location>
</feature>
<feature type="strand" evidence="4">
    <location>
        <begin position="97"/>
        <end position="102"/>
    </location>
</feature>
<feature type="helix" evidence="4">
    <location>
        <begin position="104"/>
        <end position="115"/>
    </location>
</feature>
<feature type="helix" evidence="4">
    <location>
        <begin position="117"/>
        <end position="119"/>
    </location>
</feature>
<feature type="strand" evidence="4">
    <location>
        <begin position="120"/>
        <end position="127"/>
    </location>
</feature>
<feature type="helix" evidence="4">
    <location>
        <begin position="137"/>
        <end position="166"/>
    </location>
</feature>
<feature type="helix" evidence="4">
    <location>
        <begin position="171"/>
        <end position="177"/>
    </location>
</feature>
<feature type="helix" evidence="4">
    <location>
        <begin position="184"/>
        <end position="200"/>
    </location>
</feature>
<feature type="helix" evidence="4">
    <location>
        <begin position="202"/>
        <end position="206"/>
    </location>
</feature>
<feature type="helix" evidence="4">
    <location>
        <begin position="212"/>
        <end position="216"/>
    </location>
</feature>
<feature type="helix" evidence="4">
    <location>
        <begin position="217"/>
        <end position="221"/>
    </location>
</feature>
<feature type="strand" evidence="4">
    <location>
        <begin position="222"/>
        <end position="227"/>
    </location>
</feature>
<feature type="helix" evidence="4">
    <location>
        <begin position="234"/>
        <end position="246"/>
    </location>
</feature>
<feature type="strand" evidence="4">
    <location>
        <begin position="250"/>
        <end position="256"/>
    </location>
</feature>
<feature type="helix" evidence="4">
    <location>
        <begin position="259"/>
        <end position="262"/>
    </location>
</feature>
<feature type="helix" evidence="4">
    <location>
        <begin position="264"/>
        <end position="275"/>
    </location>
</feature>
<comment type="similarity">
    <text evidence="3">Belongs to the AB hydrolase superfamily.</text>
</comment>
<accession>Q2FV39</accession>
<organism>
    <name type="scientific">Staphylococcus aureus (strain NCTC 8325 / PS 47)</name>
    <dbReference type="NCBI Taxonomy" id="93061"/>
    <lineage>
        <taxon>Bacteria</taxon>
        <taxon>Bacillati</taxon>
        <taxon>Bacillota</taxon>
        <taxon>Bacilli</taxon>
        <taxon>Bacillales</taxon>
        <taxon>Staphylococcaceae</taxon>
        <taxon>Staphylococcus</taxon>
    </lineage>
</organism>